<name>NFYB_BOVIN</name>
<dbReference type="EMBL" id="BC109900">
    <property type="protein sequence ID" value="AAI09901.1"/>
    <property type="molecule type" value="mRNA"/>
</dbReference>
<dbReference type="RefSeq" id="NP_001073254.1">
    <property type="nucleotide sequence ID" value="NM_001079786.2"/>
</dbReference>
<dbReference type="RefSeq" id="XP_005206739.1">
    <property type="nucleotide sequence ID" value="XM_005206682.5"/>
</dbReference>
<dbReference type="RefSeq" id="XP_005206741.1">
    <property type="nucleotide sequence ID" value="XM_005206684.5"/>
</dbReference>
<dbReference type="SMR" id="Q32KW0"/>
<dbReference type="FunCoup" id="Q32KW0">
    <property type="interactions" value="3247"/>
</dbReference>
<dbReference type="STRING" id="9913.ENSBTAP00000041024"/>
<dbReference type="PaxDb" id="9913-ENSBTAP00000041024"/>
<dbReference type="GeneID" id="614382"/>
<dbReference type="KEGG" id="bta:614382"/>
<dbReference type="CTD" id="4801"/>
<dbReference type="VEuPathDB" id="HostDB:ENSBTAG00000030744"/>
<dbReference type="eggNOG" id="KOG0869">
    <property type="taxonomic scope" value="Eukaryota"/>
</dbReference>
<dbReference type="HOGENOM" id="CLU_066247_9_2_1"/>
<dbReference type="InParanoid" id="Q32KW0"/>
<dbReference type="OMA" id="NATHGDS"/>
<dbReference type="OrthoDB" id="386949at2759"/>
<dbReference type="TreeFam" id="TF314521"/>
<dbReference type="Proteomes" id="UP000009136">
    <property type="component" value="Chromosome 5"/>
</dbReference>
<dbReference type="Bgee" id="ENSBTAG00000030744">
    <property type="expression patterns" value="Expressed in oocyte and 109 other cell types or tissues"/>
</dbReference>
<dbReference type="GO" id="GO:0016602">
    <property type="term" value="C:CCAAT-binding factor complex"/>
    <property type="evidence" value="ECO:0000318"/>
    <property type="project" value="GO_Central"/>
</dbReference>
<dbReference type="GO" id="GO:0001228">
    <property type="term" value="F:DNA-binding transcription activator activity, RNA polymerase II-specific"/>
    <property type="evidence" value="ECO:0007669"/>
    <property type="project" value="InterPro"/>
</dbReference>
<dbReference type="GO" id="GO:0000981">
    <property type="term" value="F:DNA-binding transcription factor activity, RNA polymerase II-specific"/>
    <property type="evidence" value="ECO:0000318"/>
    <property type="project" value="GO_Central"/>
</dbReference>
<dbReference type="GO" id="GO:0046982">
    <property type="term" value="F:protein heterodimerization activity"/>
    <property type="evidence" value="ECO:0007669"/>
    <property type="project" value="InterPro"/>
</dbReference>
<dbReference type="GO" id="GO:0043565">
    <property type="term" value="F:sequence-specific DNA binding"/>
    <property type="evidence" value="ECO:0007669"/>
    <property type="project" value="InterPro"/>
</dbReference>
<dbReference type="GO" id="GO:0006357">
    <property type="term" value="P:regulation of transcription by RNA polymerase II"/>
    <property type="evidence" value="ECO:0000318"/>
    <property type="project" value="GO_Central"/>
</dbReference>
<dbReference type="CDD" id="cd22907">
    <property type="entry name" value="HFD_NFYB"/>
    <property type="match status" value="1"/>
</dbReference>
<dbReference type="FunFam" id="1.10.20.10:FF:000027">
    <property type="entry name" value="Nuclear transcription factor Y subunit beta"/>
    <property type="match status" value="1"/>
</dbReference>
<dbReference type="Gene3D" id="1.10.20.10">
    <property type="entry name" value="Histone, subunit A"/>
    <property type="match status" value="1"/>
</dbReference>
<dbReference type="InterPro" id="IPR003958">
    <property type="entry name" value="CBFA_NFYB_domain"/>
</dbReference>
<dbReference type="InterPro" id="IPR009072">
    <property type="entry name" value="Histone-fold"/>
</dbReference>
<dbReference type="InterPro" id="IPR027113">
    <property type="entry name" value="Transc_fact_NFYB/HAP3"/>
</dbReference>
<dbReference type="InterPro" id="IPR003956">
    <property type="entry name" value="Transcrpt_fac_NFYB/HAP3_CS"/>
</dbReference>
<dbReference type="PANTHER" id="PTHR11064">
    <property type="entry name" value="CCAAT-BINDING TRANSCRIPTION FACTOR-RELATED"/>
    <property type="match status" value="1"/>
</dbReference>
<dbReference type="PANTHER" id="PTHR11064:SF9">
    <property type="entry name" value="NUCLEAR TRANSCRIPTION FACTOR Y SUBUNIT BETA"/>
    <property type="match status" value="1"/>
</dbReference>
<dbReference type="Pfam" id="PF00808">
    <property type="entry name" value="CBFD_NFYB_HMF"/>
    <property type="match status" value="1"/>
</dbReference>
<dbReference type="PRINTS" id="PR00615">
    <property type="entry name" value="CCAATSUBUNTA"/>
</dbReference>
<dbReference type="SUPFAM" id="SSF47113">
    <property type="entry name" value="Histone-fold"/>
    <property type="match status" value="1"/>
</dbReference>
<dbReference type="PROSITE" id="PS00685">
    <property type="entry name" value="NFYB_HAP3"/>
    <property type="match status" value="1"/>
</dbReference>
<protein>
    <recommendedName>
        <fullName>Nuclear transcription factor Y subunit beta</fullName>
    </recommendedName>
    <alternativeName>
        <fullName>CAAT box DNA-binding protein subunit B</fullName>
    </alternativeName>
    <alternativeName>
        <fullName>Nuclear transcription factor Y subunit B</fullName>
        <shortName>NF-YB</shortName>
    </alternativeName>
</protein>
<gene>
    <name type="primary">NFYB</name>
</gene>
<reference key="1">
    <citation type="submission" date="2005-11" db="EMBL/GenBank/DDBJ databases">
        <authorList>
            <consortium name="NIH - Mammalian Gene Collection (MGC) project"/>
        </authorList>
    </citation>
    <scope>NUCLEOTIDE SEQUENCE [LARGE SCALE MRNA]</scope>
    <source>
        <strain>Crossbred X Angus</strain>
        <tissue>Liver</tissue>
    </source>
</reference>
<keyword id="KW-0010">Activator</keyword>
<keyword id="KW-0238">DNA-binding</keyword>
<keyword id="KW-1017">Isopeptide bond</keyword>
<keyword id="KW-0539">Nucleus</keyword>
<keyword id="KW-1185">Reference proteome</keyword>
<keyword id="KW-0804">Transcription</keyword>
<keyword id="KW-0805">Transcription regulation</keyword>
<keyword id="KW-0832">Ubl conjugation</keyword>
<comment type="function">
    <text evidence="1">Component of the sequence-specific heterotrimeric transcription factor (NF-Y) which specifically recognizes a 5'-CCAAT-3' box motif found in the promoters of its target genes. NF-Y can function as both an activator and a repressor, depending on its interacting cofactors (By similarity).</text>
</comment>
<comment type="subunit">
    <text evidence="1">Heterotrimeric transcription factor composed of three components, NF-YA, NF-YB and NF-YC. NF-YB and NF-YC must interact and dimerize for NF-YA association and DNA binding. Interacts with C1QBP (By similarity).</text>
</comment>
<comment type="subcellular location">
    <subcellularLocation>
        <location evidence="1">Nucleus</location>
    </subcellularLocation>
</comment>
<comment type="domain">
    <text>Can be divided into 3 domains: the weakly conserved A domain, the highly conserved B domain thought to be involved in subunit interaction and DNA binding, and the Glu-rich C domain.</text>
</comment>
<comment type="PTM">
    <text evidence="1">Monoubiquitination at Lys-140 plays an important role in transcriptional activation by allowing the deposition of histone H3 methylations as well as histone H2B monoubiquitination at 'Lys-121'.</text>
</comment>
<comment type="similarity">
    <text evidence="4">Belongs to the NFYB/HAP3 subunit family.</text>
</comment>
<sequence>MTMDGDSSTTDASQLGISADYIGGSHYVIQPHDDTEDSMNDHEDTNGSKESFREQDIYLPIANVARIMKNAIPQTGKIAKDAKECVQECVSEFISFITSEASERCHQEKRKTINGEDILFAMSTLGFDSYVEPLKLYLQKFREAMKGEKGIGGAVTATDGLSEELTDEAFTNQLPAGLITADGQQQNVMVYTTSYQQISGVQQIQFS</sequence>
<accession>Q32KW0</accession>
<evidence type="ECO:0000250" key="1"/>
<evidence type="ECO:0000250" key="2">
    <source>
        <dbReference type="UniProtKB" id="P25208"/>
    </source>
</evidence>
<evidence type="ECO:0000256" key="3">
    <source>
        <dbReference type="SAM" id="MobiDB-lite"/>
    </source>
</evidence>
<evidence type="ECO:0000305" key="4"/>
<organism>
    <name type="scientific">Bos taurus</name>
    <name type="common">Bovine</name>
    <dbReference type="NCBI Taxonomy" id="9913"/>
    <lineage>
        <taxon>Eukaryota</taxon>
        <taxon>Metazoa</taxon>
        <taxon>Chordata</taxon>
        <taxon>Craniata</taxon>
        <taxon>Vertebrata</taxon>
        <taxon>Euteleostomi</taxon>
        <taxon>Mammalia</taxon>
        <taxon>Eutheria</taxon>
        <taxon>Laurasiatheria</taxon>
        <taxon>Artiodactyla</taxon>
        <taxon>Ruminantia</taxon>
        <taxon>Pecora</taxon>
        <taxon>Bovidae</taxon>
        <taxon>Bovinae</taxon>
        <taxon>Bos</taxon>
    </lineage>
</organism>
<feature type="chain" id="PRO_0000269713" description="Nuclear transcription factor Y subunit beta">
    <location>
        <begin position="1"/>
        <end position="207"/>
    </location>
</feature>
<feature type="DNA-binding region" evidence="1">
    <location>
        <begin position="59"/>
        <end position="65"/>
    </location>
</feature>
<feature type="region of interest" description="A domain">
    <location>
        <begin position="1"/>
        <end position="52"/>
    </location>
</feature>
<feature type="region of interest" description="Disordered" evidence="3">
    <location>
        <begin position="27"/>
        <end position="52"/>
    </location>
</feature>
<feature type="region of interest" description="B domain">
    <location>
        <begin position="53"/>
        <end position="142"/>
    </location>
</feature>
<feature type="region of interest" description="Subunit association domain (SAD)" evidence="1">
    <location>
        <begin position="86"/>
        <end position="97"/>
    </location>
</feature>
<feature type="region of interest" description="C domain">
    <location>
        <begin position="143"/>
        <end position="207"/>
    </location>
</feature>
<feature type="compositionally biased region" description="Basic and acidic residues" evidence="3">
    <location>
        <begin position="39"/>
        <end position="52"/>
    </location>
</feature>
<feature type="cross-link" description="Glycyl lysine isopeptide (Lys-Gly) (interchain with G-Cter in ubiquitin)" evidence="2">
    <location>
        <position position="140"/>
    </location>
</feature>
<proteinExistence type="evidence at transcript level"/>